<name>NUOA_RHOPB</name>
<comment type="function">
    <text evidence="1">NDH-1 shuttles electrons from NADH, via FMN and iron-sulfur (Fe-S) centers, to quinones in the respiratory chain. The immediate electron acceptor for the enzyme in this species is believed to be ubiquinone. Couples the redox reaction to proton translocation (for every two electrons transferred, four hydrogen ions are translocated across the cytoplasmic membrane), and thus conserves the redox energy in a proton gradient.</text>
</comment>
<comment type="catalytic activity">
    <reaction evidence="1">
        <text>a quinone + NADH + 5 H(+)(in) = a quinol + NAD(+) + 4 H(+)(out)</text>
        <dbReference type="Rhea" id="RHEA:57888"/>
        <dbReference type="ChEBI" id="CHEBI:15378"/>
        <dbReference type="ChEBI" id="CHEBI:24646"/>
        <dbReference type="ChEBI" id="CHEBI:57540"/>
        <dbReference type="ChEBI" id="CHEBI:57945"/>
        <dbReference type="ChEBI" id="CHEBI:132124"/>
    </reaction>
</comment>
<comment type="subunit">
    <text evidence="1">NDH-1 is composed of 14 different subunits. Subunits NuoA, H, J, K, L, M, N constitute the membrane sector of the complex.</text>
</comment>
<comment type="subcellular location">
    <subcellularLocation>
        <location evidence="1">Cell inner membrane</location>
        <topology evidence="1">Multi-pass membrane protein</topology>
    </subcellularLocation>
</comment>
<comment type="similarity">
    <text evidence="1">Belongs to the complex I subunit 3 family.</text>
</comment>
<proteinExistence type="inferred from homology"/>
<keyword id="KW-0997">Cell inner membrane</keyword>
<keyword id="KW-1003">Cell membrane</keyword>
<keyword id="KW-0472">Membrane</keyword>
<keyword id="KW-0520">NAD</keyword>
<keyword id="KW-0874">Quinone</keyword>
<keyword id="KW-1278">Translocase</keyword>
<keyword id="KW-0812">Transmembrane</keyword>
<keyword id="KW-1133">Transmembrane helix</keyword>
<keyword id="KW-0813">Transport</keyword>
<keyword id="KW-0830">Ubiquinone</keyword>
<dbReference type="EC" id="7.1.1.-" evidence="1"/>
<dbReference type="EMBL" id="CP000301">
    <property type="protein sequence ID" value="ABD89597.1"/>
    <property type="molecule type" value="Genomic_DNA"/>
</dbReference>
<dbReference type="SMR" id="Q20Z39"/>
<dbReference type="STRING" id="316056.RPC_4071"/>
<dbReference type="KEGG" id="rpc:RPC_4071"/>
<dbReference type="eggNOG" id="COG0838">
    <property type="taxonomic scope" value="Bacteria"/>
</dbReference>
<dbReference type="HOGENOM" id="CLU_119549_2_0_5"/>
<dbReference type="OrthoDB" id="9791970at2"/>
<dbReference type="GO" id="GO:0030964">
    <property type="term" value="C:NADH dehydrogenase complex"/>
    <property type="evidence" value="ECO:0007669"/>
    <property type="project" value="TreeGrafter"/>
</dbReference>
<dbReference type="GO" id="GO:0005886">
    <property type="term" value="C:plasma membrane"/>
    <property type="evidence" value="ECO:0007669"/>
    <property type="project" value="UniProtKB-SubCell"/>
</dbReference>
<dbReference type="GO" id="GO:0008137">
    <property type="term" value="F:NADH dehydrogenase (ubiquinone) activity"/>
    <property type="evidence" value="ECO:0007669"/>
    <property type="project" value="InterPro"/>
</dbReference>
<dbReference type="GO" id="GO:0050136">
    <property type="term" value="F:NADH:ubiquinone reductase (non-electrogenic) activity"/>
    <property type="evidence" value="ECO:0007669"/>
    <property type="project" value="UniProtKB-UniRule"/>
</dbReference>
<dbReference type="GO" id="GO:0048038">
    <property type="term" value="F:quinone binding"/>
    <property type="evidence" value="ECO:0007669"/>
    <property type="project" value="UniProtKB-KW"/>
</dbReference>
<dbReference type="Gene3D" id="1.20.58.1610">
    <property type="entry name" value="NADH:ubiquinone/plastoquinone oxidoreductase, chain 3"/>
    <property type="match status" value="1"/>
</dbReference>
<dbReference type="HAMAP" id="MF_01394">
    <property type="entry name" value="NDH1_NuoA"/>
    <property type="match status" value="1"/>
</dbReference>
<dbReference type="InterPro" id="IPR023043">
    <property type="entry name" value="NAD(P)H_OxRDtase_bac/plastid"/>
</dbReference>
<dbReference type="InterPro" id="IPR000440">
    <property type="entry name" value="NADH_UbQ/plastoQ_OxRdtase_su3"/>
</dbReference>
<dbReference type="InterPro" id="IPR038430">
    <property type="entry name" value="NDAH_ubi_oxred_su3_sf"/>
</dbReference>
<dbReference type="PANTHER" id="PTHR11058:SF21">
    <property type="entry name" value="NADH-QUINONE OXIDOREDUCTASE SUBUNIT A"/>
    <property type="match status" value="1"/>
</dbReference>
<dbReference type="PANTHER" id="PTHR11058">
    <property type="entry name" value="NADH-UBIQUINONE OXIDOREDUCTASE CHAIN 3"/>
    <property type="match status" value="1"/>
</dbReference>
<dbReference type="Pfam" id="PF00507">
    <property type="entry name" value="Oxidored_q4"/>
    <property type="match status" value="1"/>
</dbReference>
<gene>
    <name evidence="1" type="primary">nuoA</name>
    <name type="ordered locus">RPC_4071</name>
</gene>
<evidence type="ECO:0000255" key="1">
    <source>
        <dbReference type="HAMAP-Rule" id="MF_01394"/>
    </source>
</evidence>
<sequence length="129" mass="13469">MGDFLFPIDSGAALAIHVALSAGIVAAIIGVAAVLREKRAGARPDTPYEGGVLPAAPPQGPQNAPYFLIAALFVIFDMEAAILFAWAVAAREAGWVGLIEAAIFIGVLLLALVYLWIDGALDWGPGERK</sequence>
<organism>
    <name type="scientific">Rhodopseudomonas palustris (strain BisB18)</name>
    <dbReference type="NCBI Taxonomy" id="316056"/>
    <lineage>
        <taxon>Bacteria</taxon>
        <taxon>Pseudomonadati</taxon>
        <taxon>Pseudomonadota</taxon>
        <taxon>Alphaproteobacteria</taxon>
        <taxon>Hyphomicrobiales</taxon>
        <taxon>Nitrobacteraceae</taxon>
        <taxon>Rhodopseudomonas</taxon>
    </lineage>
</organism>
<protein>
    <recommendedName>
        <fullName evidence="1">NADH-quinone oxidoreductase subunit A</fullName>
        <ecNumber evidence="1">7.1.1.-</ecNumber>
    </recommendedName>
    <alternativeName>
        <fullName evidence="1">NADH dehydrogenase I subunit A</fullName>
    </alternativeName>
    <alternativeName>
        <fullName evidence="1">NDH-1 subunit A</fullName>
    </alternativeName>
    <alternativeName>
        <fullName evidence="1">NUO1</fullName>
    </alternativeName>
</protein>
<reference key="1">
    <citation type="submission" date="2006-03" db="EMBL/GenBank/DDBJ databases">
        <title>Complete sequence of Rhodopseudomonas palustris BisB18.</title>
        <authorList>
            <consortium name="US DOE Joint Genome Institute"/>
            <person name="Copeland A."/>
            <person name="Lucas S."/>
            <person name="Lapidus A."/>
            <person name="Barry K."/>
            <person name="Detter J.C."/>
            <person name="Glavina del Rio T."/>
            <person name="Hammon N."/>
            <person name="Israni S."/>
            <person name="Dalin E."/>
            <person name="Tice H."/>
            <person name="Pitluck S."/>
            <person name="Chain P."/>
            <person name="Malfatti S."/>
            <person name="Shin M."/>
            <person name="Vergez L."/>
            <person name="Schmutz J."/>
            <person name="Larimer F."/>
            <person name="Land M."/>
            <person name="Hauser L."/>
            <person name="Pelletier D.A."/>
            <person name="Kyrpides N."/>
            <person name="Anderson I."/>
            <person name="Oda Y."/>
            <person name="Harwood C.S."/>
            <person name="Richardson P."/>
        </authorList>
    </citation>
    <scope>NUCLEOTIDE SEQUENCE [LARGE SCALE GENOMIC DNA]</scope>
    <source>
        <strain>BisB18</strain>
    </source>
</reference>
<feature type="chain" id="PRO_0000362757" description="NADH-quinone oxidoreductase subunit A">
    <location>
        <begin position="1"/>
        <end position="129"/>
    </location>
</feature>
<feature type="transmembrane region" description="Helical" evidence="1">
    <location>
        <begin position="14"/>
        <end position="34"/>
    </location>
</feature>
<feature type="transmembrane region" description="Helical" evidence="1">
    <location>
        <begin position="67"/>
        <end position="87"/>
    </location>
</feature>
<feature type="transmembrane region" description="Helical" evidence="1">
    <location>
        <begin position="97"/>
        <end position="117"/>
    </location>
</feature>
<accession>Q20Z39</accession>